<feature type="chain" id="PRO_0000248715" description="Proline--tRNA ligase">
    <location>
        <begin position="1"/>
        <end position="590"/>
    </location>
</feature>
<protein>
    <recommendedName>
        <fullName evidence="1">Proline--tRNA ligase</fullName>
        <ecNumber evidence="1">6.1.1.15</ecNumber>
    </recommendedName>
    <alternativeName>
        <fullName evidence="1">Prolyl-tRNA synthetase</fullName>
        <shortName evidence="1">ProRS</shortName>
    </alternativeName>
</protein>
<gene>
    <name evidence="1" type="primary">proS</name>
    <name type="ordered locus">Lxx12210</name>
</gene>
<reference key="1">
    <citation type="journal article" date="2004" name="Mol. Plant Microbe Interact.">
        <title>The genome sequence of the Gram-positive sugarcane pathogen Leifsonia xyli subsp. xyli.</title>
        <authorList>
            <person name="Monteiro-Vitorello C.B."/>
            <person name="Camargo L.E.A."/>
            <person name="Van Sluys M.A."/>
            <person name="Kitajima J.P."/>
            <person name="Truffi D."/>
            <person name="do Amaral A.M."/>
            <person name="Harakava R."/>
            <person name="de Oliveira J.C.F."/>
            <person name="Wood D."/>
            <person name="de Oliveira M.C."/>
            <person name="Miyaki C.Y."/>
            <person name="Takita M.A."/>
            <person name="da Silva A.C.R."/>
            <person name="Furlan L.R."/>
            <person name="Carraro D.M."/>
            <person name="Camarotte G."/>
            <person name="Almeida N.F. Jr."/>
            <person name="Carrer H."/>
            <person name="Coutinho L.L."/>
            <person name="El-Dorry H.A."/>
            <person name="Ferro M.I.T."/>
            <person name="Gagliardi P.R."/>
            <person name="Giglioti E."/>
            <person name="Goldman M.H.S."/>
            <person name="Goldman G.H."/>
            <person name="Kimura E.T."/>
            <person name="Ferro E.S."/>
            <person name="Kuramae E.E."/>
            <person name="Lemos E.G.M."/>
            <person name="Lemos M.V.F."/>
            <person name="Mauro S.M.Z."/>
            <person name="Machado M.A."/>
            <person name="Marino C.L."/>
            <person name="Menck C.F."/>
            <person name="Nunes L.R."/>
            <person name="Oliveira R.C."/>
            <person name="Pereira G.G."/>
            <person name="Siqueira W."/>
            <person name="de Souza A.A."/>
            <person name="Tsai S.M."/>
            <person name="Zanca A.S."/>
            <person name="Simpson A.J.G."/>
            <person name="Brumbley S.M."/>
            <person name="Setubal J.C."/>
        </authorList>
    </citation>
    <scope>NUCLEOTIDE SEQUENCE [LARGE SCALE GENOMIC DNA]</scope>
    <source>
        <strain>CTCB07</strain>
    </source>
</reference>
<evidence type="ECO:0000255" key="1">
    <source>
        <dbReference type="HAMAP-Rule" id="MF_01569"/>
    </source>
</evidence>
<sequence length="590" mass="63697">MPTRLTNYFLRTLREDPADAEVTSHRLLVRAGYIRRQAPGVFAWLPLGLRVKAKIERIIREELAAAGAHEVHFPALLPREPYEITGRWEEYGDALFHLKDRKGADYLLAPTHEEAFTLLVKDLYSSYKDLPLTIFQIQDKYRDEARPRAGLLRGREFTMKDAYSFDATDAGLDVSYQAQRDAYERIFARLGLDFVIVQADAGAMGGSRSEEFLHPTPIGEDTFVRSAGGYAANVEAFTTVAPPARPFEGLPSPEVHDTPNAPTIQALVEVANEQSPRPDGRVWTAADTLKNVVLALTHLDGTRELVVVGLPGDREVDLKRAEVAFAPAGVEAATEDDFAANPGLVKGYIGPWSAGGPVLGEEAATGLRFLVDLRVVDGSGWITGANLPGKHVFGLVAGRDFDWDGTVEVAEVKAGDPAPDGSGPVELARGMEIGHVFQLGRKYADALGLTVLDENGKLVTVTMGSYGIGVTRILAIIAEENNDDKGLVWPEAVAPFDVHVVAAGREQVAFDVAEQAVAQLEAVGLDVLYDDRPKVSPGVKFGDAELIGVPRVLVVGRGAAQGEVELWDRRGGNHTTLPLSEAVAALTTSS</sequence>
<proteinExistence type="inferred from homology"/>
<dbReference type="EC" id="6.1.1.15" evidence="1"/>
<dbReference type="EMBL" id="AE016822">
    <property type="protein sequence ID" value="AAT89067.1"/>
    <property type="molecule type" value="Genomic_DNA"/>
</dbReference>
<dbReference type="RefSeq" id="WP_011186063.1">
    <property type="nucleotide sequence ID" value="NC_006087.1"/>
</dbReference>
<dbReference type="SMR" id="Q6AEX8"/>
<dbReference type="STRING" id="281090.Lxx12210"/>
<dbReference type="KEGG" id="lxx:Lxx12210"/>
<dbReference type="eggNOG" id="COG0442">
    <property type="taxonomic scope" value="Bacteria"/>
</dbReference>
<dbReference type="HOGENOM" id="CLU_016739_0_0_11"/>
<dbReference type="Proteomes" id="UP000001306">
    <property type="component" value="Chromosome"/>
</dbReference>
<dbReference type="GO" id="GO:0005829">
    <property type="term" value="C:cytosol"/>
    <property type="evidence" value="ECO:0007669"/>
    <property type="project" value="TreeGrafter"/>
</dbReference>
<dbReference type="GO" id="GO:0002161">
    <property type="term" value="F:aminoacyl-tRNA deacylase activity"/>
    <property type="evidence" value="ECO:0007669"/>
    <property type="project" value="InterPro"/>
</dbReference>
<dbReference type="GO" id="GO:0005524">
    <property type="term" value="F:ATP binding"/>
    <property type="evidence" value="ECO:0007669"/>
    <property type="project" value="UniProtKB-UniRule"/>
</dbReference>
<dbReference type="GO" id="GO:0004827">
    <property type="term" value="F:proline-tRNA ligase activity"/>
    <property type="evidence" value="ECO:0007669"/>
    <property type="project" value="UniProtKB-UniRule"/>
</dbReference>
<dbReference type="GO" id="GO:0006433">
    <property type="term" value="P:prolyl-tRNA aminoacylation"/>
    <property type="evidence" value="ECO:0007669"/>
    <property type="project" value="UniProtKB-UniRule"/>
</dbReference>
<dbReference type="CDD" id="cd00861">
    <property type="entry name" value="ProRS_anticodon_short"/>
    <property type="match status" value="1"/>
</dbReference>
<dbReference type="CDD" id="cd00779">
    <property type="entry name" value="ProRS_core_prok"/>
    <property type="match status" value="1"/>
</dbReference>
<dbReference type="Gene3D" id="3.40.50.800">
    <property type="entry name" value="Anticodon-binding domain"/>
    <property type="match status" value="1"/>
</dbReference>
<dbReference type="Gene3D" id="3.30.930.10">
    <property type="entry name" value="Bira Bifunctional Protein, Domain 2"/>
    <property type="match status" value="2"/>
</dbReference>
<dbReference type="Gene3D" id="3.90.960.10">
    <property type="entry name" value="YbaK/aminoacyl-tRNA synthetase-associated domain"/>
    <property type="match status" value="1"/>
</dbReference>
<dbReference type="HAMAP" id="MF_01569">
    <property type="entry name" value="Pro_tRNA_synth_type1"/>
    <property type="match status" value="1"/>
</dbReference>
<dbReference type="InterPro" id="IPR002314">
    <property type="entry name" value="aa-tRNA-synt_IIb"/>
</dbReference>
<dbReference type="InterPro" id="IPR006195">
    <property type="entry name" value="aa-tRNA-synth_II"/>
</dbReference>
<dbReference type="InterPro" id="IPR045864">
    <property type="entry name" value="aa-tRNA-synth_II/BPL/LPL"/>
</dbReference>
<dbReference type="InterPro" id="IPR004154">
    <property type="entry name" value="Anticodon-bd"/>
</dbReference>
<dbReference type="InterPro" id="IPR036621">
    <property type="entry name" value="Anticodon-bd_dom_sf"/>
</dbReference>
<dbReference type="InterPro" id="IPR002316">
    <property type="entry name" value="Pro-tRNA-ligase_IIa"/>
</dbReference>
<dbReference type="InterPro" id="IPR004500">
    <property type="entry name" value="Pro-tRNA-synth_IIa_bac-type"/>
</dbReference>
<dbReference type="InterPro" id="IPR023717">
    <property type="entry name" value="Pro-tRNA-Synthase_IIa_type1"/>
</dbReference>
<dbReference type="InterPro" id="IPR050062">
    <property type="entry name" value="Pro-tRNA_synthetase"/>
</dbReference>
<dbReference type="InterPro" id="IPR044140">
    <property type="entry name" value="ProRS_anticodon_short"/>
</dbReference>
<dbReference type="InterPro" id="IPR033730">
    <property type="entry name" value="ProRS_core_prok"/>
</dbReference>
<dbReference type="InterPro" id="IPR036754">
    <property type="entry name" value="YbaK/aa-tRNA-synt-asso_dom_sf"/>
</dbReference>
<dbReference type="InterPro" id="IPR007214">
    <property type="entry name" value="YbaK/aa-tRNA-synth-assoc-dom"/>
</dbReference>
<dbReference type="NCBIfam" id="NF006625">
    <property type="entry name" value="PRK09194.1"/>
    <property type="match status" value="1"/>
</dbReference>
<dbReference type="NCBIfam" id="TIGR00409">
    <property type="entry name" value="proS_fam_II"/>
    <property type="match status" value="1"/>
</dbReference>
<dbReference type="PANTHER" id="PTHR42753">
    <property type="entry name" value="MITOCHONDRIAL RIBOSOME PROTEIN L39/PROLYL-TRNA LIGASE FAMILY MEMBER"/>
    <property type="match status" value="1"/>
</dbReference>
<dbReference type="PANTHER" id="PTHR42753:SF2">
    <property type="entry name" value="PROLINE--TRNA LIGASE"/>
    <property type="match status" value="1"/>
</dbReference>
<dbReference type="Pfam" id="PF03129">
    <property type="entry name" value="HGTP_anticodon"/>
    <property type="match status" value="1"/>
</dbReference>
<dbReference type="Pfam" id="PF00587">
    <property type="entry name" value="tRNA-synt_2b"/>
    <property type="match status" value="1"/>
</dbReference>
<dbReference type="Pfam" id="PF04073">
    <property type="entry name" value="tRNA_edit"/>
    <property type="match status" value="1"/>
</dbReference>
<dbReference type="PRINTS" id="PR01046">
    <property type="entry name" value="TRNASYNTHPRO"/>
</dbReference>
<dbReference type="SUPFAM" id="SSF52954">
    <property type="entry name" value="Class II aaRS ABD-related"/>
    <property type="match status" value="1"/>
</dbReference>
<dbReference type="SUPFAM" id="SSF55681">
    <property type="entry name" value="Class II aaRS and biotin synthetases"/>
    <property type="match status" value="1"/>
</dbReference>
<dbReference type="SUPFAM" id="SSF55826">
    <property type="entry name" value="YbaK/ProRS associated domain"/>
    <property type="match status" value="1"/>
</dbReference>
<dbReference type="PROSITE" id="PS50862">
    <property type="entry name" value="AA_TRNA_LIGASE_II"/>
    <property type="match status" value="1"/>
</dbReference>
<keyword id="KW-0030">Aminoacyl-tRNA synthetase</keyword>
<keyword id="KW-0067">ATP-binding</keyword>
<keyword id="KW-0963">Cytoplasm</keyword>
<keyword id="KW-0436">Ligase</keyword>
<keyword id="KW-0547">Nucleotide-binding</keyword>
<keyword id="KW-0648">Protein biosynthesis</keyword>
<keyword id="KW-1185">Reference proteome</keyword>
<accession>Q6AEX8</accession>
<name>SYP_LEIXX</name>
<comment type="function">
    <text evidence="1">Catalyzes the attachment of proline to tRNA(Pro) in a two-step reaction: proline is first activated by ATP to form Pro-AMP and then transferred to the acceptor end of tRNA(Pro). As ProRS can inadvertently accommodate and process non-cognate amino acids such as alanine and cysteine, to avoid such errors it has two additional distinct editing activities against alanine. One activity is designated as 'pretransfer' editing and involves the tRNA(Pro)-independent hydrolysis of activated Ala-AMP. The other activity is designated 'posttransfer' editing and involves deacylation of mischarged Ala-tRNA(Pro). The misacylated Cys-tRNA(Pro) is not edited by ProRS.</text>
</comment>
<comment type="catalytic activity">
    <reaction evidence="1">
        <text>tRNA(Pro) + L-proline + ATP = L-prolyl-tRNA(Pro) + AMP + diphosphate</text>
        <dbReference type="Rhea" id="RHEA:14305"/>
        <dbReference type="Rhea" id="RHEA-COMP:9700"/>
        <dbReference type="Rhea" id="RHEA-COMP:9702"/>
        <dbReference type="ChEBI" id="CHEBI:30616"/>
        <dbReference type="ChEBI" id="CHEBI:33019"/>
        <dbReference type="ChEBI" id="CHEBI:60039"/>
        <dbReference type="ChEBI" id="CHEBI:78442"/>
        <dbReference type="ChEBI" id="CHEBI:78532"/>
        <dbReference type="ChEBI" id="CHEBI:456215"/>
        <dbReference type="EC" id="6.1.1.15"/>
    </reaction>
</comment>
<comment type="subunit">
    <text evidence="1">Homodimer.</text>
</comment>
<comment type="subcellular location">
    <subcellularLocation>
        <location evidence="1">Cytoplasm</location>
    </subcellularLocation>
</comment>
<comment type="domain">
    <text evidence="1">Consists of three domains: the N-terminal catalytic domain, the editing domain and the C-terminal anticodon-binding domain.</text>
</comment>
<comment type="similarity">
    <text evidence="1">Belongs to the class-II aminoacyl-tRNA synthetase family. ProS type 1 subfamily.</text>
</comment>
<organism>
    <name type="scientific">Leifsonia xyli subsp. xyli (strain CTCB07)</name>
    <dbReference type="NCBI Taxonomy" id="281090"/>
    <lineage>
        <taxon>Bacteria</taxon>
        <taxon>Bacillati</taxon>
        <taxon>Actinomycetota</taxon>
        <taxon>Actinomycetes</taxon>
        <taxon>Micrococcales</taxon>
        <taxon>Microbacteriaceae</taxon>
        <taxon>Leifsonia</taxon>
    </lineage>
</organism>